<evidence type="ECO:0000255" key="1">
    <source>
        <dbReference type="HAMAP-Rule" id="MF_02005"/>
    </source>
</evidence>
<reference key="1">
    <citation type="journal article" date="2005" name="Genome Res.">
        <title>Complete genome sequence of the hyperthermophilic archaeon Thermococcus kodakaraensis KOD1 and comparison with Pyrococcus genomes.</title>
        <authorList>
            <person name="Fukui T."/>
            <person name="Atomi H."/>
            <person name="Kanai T."/>
            <person name="Matsumi R."/>
            <person name="Fujiwara S."/>
            <person name="Imanaka T."/>
        </authorList>
    </citation>
    <scope>NUCLEOTIDE SEQUENCE [LARGE SCALE GENOMIC DNA]</scope>
    <source>
        <strain>ATCC BAA-918 / JCM 12380 / KOD1</strain>
    </source>
</reference>
<keyword id="KW-0030">Aminoacyl-tRNA synthetase</keyword>
<keyword id="KW-0067">ATP-binding</keyword>
<keyword id="KW-0963">Cytoplasm</keyword>
<keyword id="KW-0436">Ligase</keyword>
<keyword id="KW-0547">Nucleotide-binding</keyword>
<keyword id="KW-0648">Protein biosynthesis</keyword>
<keyword id="KW-1185">Reference proteome</keyword>
<proteinExistence type="inferred from homology"/>
<name>SYV_THEKO</name>
<gene>
    <name evidence="1" type="primary">valS</name>
    <name type="ordered locus">TK1274</name>
</gene>
<dbReference type="EC" id="6.1.1.9" evidence="1"/>
<dbReference type="EMBL" id="AP006878">
    <property type="protein sequence ID" value="BAD85463.1"/>
    <property type="molecule type" value="Genomic_DNA"/>
</dbReference>
<dbReference type="RefSeq" id="WP_011250225.1">
    <property type="nucleotide sequence ID" value="NC_006624.1"/>
</dbReference>
<dbReference type="SMR" id="Q5JGN7"/>
<dbReference type="FunCoup" id="Q5JGN7">
    <property type="interactions" value="142"/>
</dbReference>
<dbReference type="STRING" id="69014.TK1274"/>
<dbReference type="EnsemblBacteria" id="BAD85463">
    <property type="protein sequence ID" value="BAD85463"/>
    <property type="gene ID" value="TK1274"/>
</dbReference>
<dbReference type="GeneID" id="78447791"/>
<dbReference type="KEGG" id="tko:TK1274"/>
<dbReference type="PATRIC" id="fig|69014.16.peg.1246"/>
<dbReference type="eggNOG" id="arCOG00808">
    <property type="taxonomic scope" value="Archaea"/>
</dbReference>
<dbReference type="HOGENOM" id="CLU_001493_0_2_2"/>
<dbReference type="InParanoid" id="Q5JGN7"/>
<dbReference type="OrthoDB" id="23906at2157"/>
<dbReference type="PhylomeDB" id="Q5JGN7"/>
<dbReference type="Proteomes" id="UP000000536">
    <property type="component" value="Chromosome"/>
</dbReference>
<dbReference type="GO" id="GO:0005829">
    <property type="term" value="C:cytosol"/>
    <property type="evidence" value="ECO:0000318"/>
    <property type="project" value="GO_Central"/>
</dbReference>
<dbReference type="GO" id="GO:0002161">
    <property type="term" value="F:aminoacyl-tRNA deacylase activity"/>
    <property type="evidence" value="ECO:0007669"/>
    <property type="project" value="InterPro"/>
</dbReference>
<dbReference type="GO" id="GO:0005524">
    <property type="term" value="F:ATP binding"/>
    <property type="evidence" value="ECO:0007669"/>
    <property type="project" value="UniProtKB-UniRule"/>
</dbReference>
<dbReference type="GO" id="GO:0004832">
    <property type="term" value="F:valine-tRNA ligase activity"/>
    <property type="evidence" value="ECO:0000318"/>
    <property type="project" value="GO_Central"/>
</dbReference>
<dbReference type="GO" id="GO:0006438">
    <property type="term" value="P:valyl-tRNA aminoacylation"/>
    <property type="evidence" value="ECO:0000318"/>
    <property type="project" value="GO_Central"/>
</dbReference>
<dbReference type="CDD" id="cd07962">
    <property type="entry name" value="Anticodon_Ia_Val"/>
    <property type="match status" value="1"/>
</dbReference>
<dbReference type="CDD" id="cd00817">
    <property type="entry name" value="ValRS_core"/>
    <property type="match status" value="1"/>
</dbReference>
<dbReference type="FunFam" id="3.30.720.200:FF:000001">
    <property type="entry name" value="Glycine--tRNA ligase 2"/>
    <property type="match status" value="1"/>
</dbReference>
<dbReference type="FunFam" id="1.10.730.10:FF:000033">
    <property type="entry name" value="Valine--tRNA ligase"/>
    <property type="match status" value="1"/>
</dbReference>
<dbReference type="FunFam" id="3.40.50.620:FF:000192">
    <property type="entry name" value="Valine--tRNA ligase"/>
    <property type="match status" value="1"/>
</dbReference>
<dbReference type="FunFam" id="3.40.50.620:FF:000324">
    <property type="entry name" value="Valine--tRNA ligase"/>
    <property type="match status" value="1"/>
</dbReference>
<dbReference type="Gene3D" id="3.30.720.200">
    <property type="match status" value="1"/>
</dbReference>
<dbReference type="Gene3D" id="3.40.50.620">
    <property type="entry name" value="HUPs"/>
    <property type="match status" value="2"/>
</dbReference>
<dbReference type="Gene3D" id="1.10.730.10">
    <property type="entry name" value="Isoleucyl-tRNA Synthetase, Domain 1"/>
    <property type="match status" value="1"/>
</dbReference>
<dbReference type="Gene3D" id="3.90.740.10">
    <property type="entry name" value="Valyl/Leucyl/Isoleucyl-tRNA synthetase, editing domain"/>
    <property type="match status" value="1"/>
</dbReference>
<dbReference type="HAMAP" id="MF_02005">
    <property type="entry name" value="Val_tRNA_synth_type2"/>
    <property type="match status" value="1"/>
</dbReference>
<dbReference type="InterPro" id="IPR001412">
    <property type="entry name" value="aa-tRNA-synth_I_CS"/>
</dbReference>
<dbReference type="InterPro" id="IPR002300">
    <property type="entry name" value="aa-tRNA-synth_Ia"/>
</dbReference>
<dbReference type="InterPro" id="IPR033705">
    <property type="entry name" value="Anticodon_Ia_Val"/>
</dbReference>
<dbReference type="InterPro" id="IPR013155">
    <property type="entry name" value="M/V/L/I-tRNA-synth_anticd-bd"/>
</dbReference>
<dbReference type="InterPro" id="IPR014729">
    <property type="entry name" value="Rossmann-like_a/b/a_fold"/>
</dbReference>
<dbReference type="InterPro" id="IPR009080">
    <property type="entry name" value="tRNAsynth_Ia_anticodon-bd"/>
</dbReference>
<dbReference type="InterPro" id="IPR009008">
    <property type="entry name" value="Val/Leu/Ile-tRNA-synth_edit"/>
</dbReference>
<dbReference type="InterPro" id="IPR022874">
    <property type="entry name" value="Valine-tRNA_ligase_type_2"/>
</dbReference>
<dbReference type="InterPro" id="IPR002303">
    <property type="entry name" value="Valyl-tRNA_ligase"/>
</dbReference>
<dbReference type="NCBIfam" id="NF009687">
    <property type="entry name" value="PRK13208.1"/>
    <property type="match status" value="1"/>
</dbReference>
<dbReference type="NCBIfam" id="TIGR00422">
    <property type="entry name" value="valS"/>
    <property type="match status" value="1"/>
</dbReference>
<dbReference type="PANTHER" id="PTHR11946:SF93">
    <property type="entry name" value="VALINE--TRNA LIGASE, CHLOROPLASTIC_MITOCHONDRIAL 2"/>
    <property type="match status" value="1"/>
</dbReference>
<dbReference type="PANTHER" id="PTHR11946">
    <property type="entry name" value="VALYL-TRNA SYNTHETASES"/>
    <property type="match status" value="1"/>
</dbReference>
<dbReference type="Pfam" id="PF08264">
    <property type="entry name" value="Anticodon_1"/>
    <property type="match status" value="1"/>
</dbReference>
<dbReference type="Pfam" id="PF19302">
    <property type="entry name" value="DUF5915"/>
    <property type="match status" value="1"/>
</dbReference>
<dbReference type="Pfam" id="PF00133">
    <property type="entry name" value="tRNA-synt_1"/>
    <property type="match status" value="1"/>
</dbReference>
<dbReference type="PRINTS" id="PR00986">
    <property type="entry name" value="TRNASYNTHVAL"/>
</dbReference>
<dbReference type="SUPFAM" id="SSF47323">
    <property type="entry name" value="Anticodon-binding domain of a subclass of class I aminoacyl-tRNA synthetases"/>
    <property type="match status" value="1"/>
</dbReference>
<dbReference type="SUPFAM" id="SSF52374">
    <property type="entry name" value="Nucleotidylyl transferase"/>
    <property type="match status" value="1"/>
</dbReference>
<dbReference type="SUPFAM" id="SSF50677">
    <property type="entry name" value="ValRS/IleRS/LeuRS editing domain"/>
    <property type="match status" value="1"/>
</dbReference>
<dbReference type="PROSITE" id="PS00178">
    <property type="entry name" value="AA_TRNA_LIGASE_I"/>
    <property type="match status" value="1"/>
</dbReference>
<organism>
    <name type="scientific">Thermococcus kodakarensis (strain ATCC BAA-918 / JCM 12380 / KOD1)</name>
    <name type="common">Pyrococcus kodakaraensis (strain KOD1)</name>
    <dbReference type="NCBI Taxonomy" id="69014"/>
    <lineage>
        <taxon>Archaea</taxon>
        <taxon>Methanobacteriati</taxon>
        <taxon>Methanobacteriota</taxon>
        <taxon>Thermococci</taxon>
        <taxon>Thermococcales</taxon>
        <taxon>Thermococcaceae</taxon>
        <taxon>Thermococcus</taxon>
    </lineage>
</organism>
<sequence>MLPKNYDPNEIEPKWQKFWLDEKIYKYELDEKKPSYAIDTPPPFTSGTLHLGHVLSHTWIDIIARYKRMTGYNVLFPQGFDNHGLPTELKVEKEFGISKDQPEKFLQKCIEWTWQAIEAMRNQFIRIGYSADWDLEYHTMDDWYKAAVQKSLIEFYKKGMLYQAEHPVYWCPRCRTSLAKAEVGYVEEDGFLYYIKLPLADGSGHVPIATTRPELMPACVAVFVHPEDERYKHVVGKKVKLPIFEREVPVLADEDVDPSFGTGAVYNCTYGDEQDVVWQKRYNLPVIIAINEDGTMNENAGPYAGLKTEEARKKIAEDLEKMGLLYKKEKIRHRVLRHTERSSCMAPIELLPKKQWFIKVKDFTDEIVKVAEQINWYPPDMFLRLKDWAESMDWDWVISRQRVFGTPIPFWVCDNGEIILPNEEDLPVDPRFEKPPRKCSDGSEPKPVTDVLDCWVDSSITPLIITKWHEAIKGDEEGKKWFEHNFPTALRPQGTDIIRTWAFYTIFRTWVLTGEKPWHDILINGMVAGPDGRKMSKSYGNVVAPDEVIPKYGADALRLWTALAPPGEDHPFKWETVDYNYRFLQKVWNIYRFAERHLENFDPASAPEELEPLDRWILSRLHRLIKFATEEMEKYRFNLLTRELITFVWHEVADDYIEMIKYRLYGDDEESKLKAKAALYELLYNVMLLLAPFVPHITEELYQNLFRERIGAKSVHLLEWPKYSEARIDEEAEKLGELAREIVGAMRRYKNSHGLSLNAKLKHVAIYTTDSYEVLKTIEKDIAGTMNIEKLEIIKGEPELEERIIEIKPNFKTVGPRYGKLVPKITAYLKENAEEVAKALKESGKIEFEVDGQKVELTKDDIVLRKAVFSEGEEVETAVVGDAVILFF</sequence>
<feature type="chain" id="PRO_0000224633" description="Valine--tRNA ligase">
    <location>
        <begin position="1"/>
        <end position="888"/>
    </location>
</feature>
<feature type="short sequence motif" description="'HIGH' region">
    <location>
        <begin position="43"/>
        <end position="53"/>
    </location>
</feature>
<feature type="short sequence motif" description="'KMSKS' region">
    <location>
        <begin position="534"/>
        <end position="538"/>
    </location>
</feature>
<feature type="binding site" evidence="1">
    <location>
        <position position="537"/>
    </location>
    <ligand>
        <name>ATP</name>
        <dbReference type="ChEBI" id="CHEBI:30616"/>
    </ligand>
</feature>
<accession>Q5JGN7</accession>
<comment type="function">
    <text evidence="1">Catalyzes the attachment of valine to tRNA(Val). As ValRS can inadvertently accommodate and process structurally similar amino acids such as threonine, to avoid such errors, it has a 'posttransfer' editing activity that hydrolyzes mischarged Thr-tRNA(Val) in a tRNA-dependent manner.</text>
</comment>
<comment type="catalytic activity">
    <reaction evidence="1">
        <text>tRNA(Val) + L-valine + ATP = L-valyl-tRNA(Val) + AMP + diphosphate</text>
        <dbReference type="Rhea" id="RHEA:10704"/>
        <dbReference type="Rhea" id="RHEA-COMP:9672"/>
        <dbReference type="Rhea" id="RHEA-COMP:9708"/>
        <dbReference type="ChEBI" id="CHEBI:30616"/>
        <dbReference type="ChEBI" id="CHEBI:33019"/>
        <dbReference type="ChEBI" id="CHEBI:57762"/>
        <dbReference type="ChEBI" id="CHEBI:78442"/>
        <dbReference type="ChEBI" id="CHEBI:78537"/>
        <dbReference type="ChEBI" id="CHEBI:456215"/>
        <dbReference type="EC" id="6.1.1.9"/>
    </reaction>
</comment>
<comment type="subcellular location">
    <subcellularLocation>
        <location evidence="1">Cytoplasm</location>
    </subcellularLocation>
</comment>
<comment type="domain">
    <text evidence="1">ValRS has two distinct active sites: one for aminoacylation and one for editing. The misactivated threonine is translocated from the active site to the editing site.</text>
</comment>
<comment type="similarity">
    <text evidence="1">Belongs to the class-I aminoacyl-tRNA synthetase family. ValS type 2 subfamily.</text>
</comment>
<protein>
    <recommendedName>
        <fullName evidence="1">Valine--tRNA ligase</fullName>
        <ecNumber evidence="1">6.1.1.9</ecNumber>
    </recommendedName>
    <alternativeName>
        <fullName evidence="1">Valyl-tRNA synthetase</fullName>
        <shortName evidence="1">ValRS</shortName>
    </alternativeName>
</protein>